<sequence>MGKGTGSFGKRRNKSHTLCVRCGRRSFHIQKSRCSACAYPAARKRTYNWSVKAIRRKTTGTGRMRYLRNVPRRFKTCFREGTQATPRNKAAASSS</sequence>
<organism>
    <name type="scientific">Arabidopsis thaliana</name>
    <name type="common">Mouse-ear cress</name>
    <dbReference type="NCBI Taxonomy" id="3702"/>
    <lineage>
        <taxon>Eukaryota</taxon>
        <taxon>Viridiplantae</taxon>
        <taxon>Streptophyta</taxon>
        <taxon>Embryophyta</taxon>
        <taxon>Tracheophyta</taxon>
        <taxon>Spermatophyta</taxon>
        <taxon>Magnoliopsida</taxon>
        <taxon>eudicotyledons</taxon>
        <taxon>Gunneridae</taxon>
        <taxon>Pentapetalae</taxon>
        <taxon>rosids</taxon>
        <taxon>malvids</taxon>
        <taxon>Brassicales</taxon>
        <taxon>Brassicaceae</taxon>
        <taxon>Camelineae</taxon>
        <taxon>Arabidopsis</taxon>
    </lineage>
</organism>
<gene>
    <name type="primary">RPL37A</name>
    <name type="ordered locus">At1g15250</name>
    <name type="ORF">F9L1.46</name>
</gene>
<comment type="function">
    <text evidence="1">Binds to the 23S rRNA.</text>
</comment>
<comment type="cofactor">
    <cofactor evidence="1">
        <name>Zn(2+)</name>
        <dbReference type="ChEBI" id="CHEBI:29105"/>
    </cofactor>
    <text evidence="1">Binds 1 zinc ion per subunit.</text>
</comment>
<comment type="similarity">
    <text evidence="4">Belongs to the eukaryotic ribosomal protein eL37 family.</text>
</comment>
<reference key="1">
    <citation type="journal article" date="2000" name="Nature">
        <title>Sequence and analysis of chromosome 1 of the plant Arabidopsis thaliana.</title>
        <authorList>
            <person name="Theologis A."/>
            <person name="Ecker J.R."/>
            <person name="Palm C.J."/>
            <person name="Federspiel N.A."/>
            <person name="Kaul S."/>
            <person name="White O."/>
            <person name="Alonso J."/>
            <person name="Altafi H."/>
            <person name="Araujo R."/>
            <person name="Bowman C.L."/>
            <person name="Brooks S.Y."/>
            <person name="Buehler E."/>
            <person name="Chan A."/>
            <person name="Chao Q."/>
            <person name="Chen H."/>
            <person name="Cheuk R.F."/>
            <person name="Chin C.W."/>
            <person name="Chung M.K."/>
            <person name="Conn L."/>
            <person name="Conway A.B."/>
            <person name="Conway A.R."/>
            <person name="Creasy T.H."/>
            <person name="Dewar K."/>
            <person name="Dunn P."/>
            <person name="Etgu P."/>
            <person name="Feldblyum T.V."/>
            <person name="Feng J.-D."/>
            <person name="Fong B."/>
            <person name="Fujii C.Y."/>
            <person name="Gill J.E."/>
            <person name="Goldsmith A.D."/>
            <person name="Haas B."/>
            <person name="Hansen N.F."/>
            <person name="Hughes B."/>
            <person name="Huizar L."/>
            <person name="Hunter J.L."/>
            <person name="Jenkins J."/>
            <person name="Johnson-Hopson C."/>
            <person name="Khan S."/>
            <person name="Khaykin E."/>
            <person name="Kim C.J."/>
            <person name="Koo H.L."/>
            <person name="Kremenetskaia I."/>
            <person name="Kurtz D.B."/>
            <person name="Kwan A."/>
            <person name="Lam B."/>
            <person name="Langin-Hooper S."/>
            <person name="Lee A."/>
            <person name="Lee J.M."/>
            <person name="Lenz C.A."/>
            <person name="Li J.H."/>
            <person name="Li Y.-P."/>
            <person name="Lin X."/>
            <person name="Liu S.X."/>
            <person name="Liu Z.A."/>
            <person name="Luros J.S."/>
            <person name="Maiti R."/>
            <person name="Marziali A."/>
            <person name="Militscher J."/>
            <person name="Miranda M."/>
            <person name="Nguyen M."/>
            <person name="Nierman W.C."/>
            <person name="Osborne B.I."/>
            <person name="Pai G."/>
            <person name="Peterson J."/>
            <person name="Pham P.K."/>
            <person name="Rizzo M."/>
            <person name="Rooney T."/>
            <person name="Rowley D."/>
            <person name="Sakano H."/>
            <person name="Salzberg S.L."/>
            <person name="Schwartz J.R."/>
            <person name="Shinn P."/>
            <person name="Southwick A.M."/>
            <person name="Sun H."/>
            <person name="Tallon L.J."/>
            <person name="Tambunga G."/>
            <person name="Toriumi M.J."/>
            <person name="Town C.D."/>
            <person name="Utterback T."/>
            <person name="Van Aken S."/>
            <person name="Vaysberg M."/>
            <person name="Vysotskaia V.S."/>
            <person name="Walker M."/>
            <person name="Wu D."/>
            <person name="Yu G."/>
            <person name="Fraser C.M."/>
            <person name="Venter J.C."/>
            <person name="Davis R.W."/>
        </authorList>
    </citation>
    <scope>NUCLEOTIDE SEQUENCE [LARGE SCALE GENOMIC DNA]</scope>
    <source>
        <strain>cv. Columbia</strain>
    </source>
</reference>
<reference key="2">
    <citation type="journal article" date="2017" name="Plant J.">
        <title>Araport11: a complete reannotation of the Arabidopsis thaliana reference genome.</title>
        <authorList>
            <person name="Cheng C.Y."/>
            <person name="Krishnakumar V."/>
            <person name="Chan A.P."/>
            <person name="Thibaud-Nissen F."/>
            <person name="Schobel S."/>
            <person name="Town C.D."/>
        </authorList>
    </citation>
    <scope>GENOME REANNOTATION</scope>
    <source>
        <strain>cv. Columbia</strain>
    </source>
</reference>
<reference key="3">
    <citation type="journal article" date="2002" name="Science">
        <title>Functional annotation of a full-length Arabidopsis cDNA collection.</title>
        <authorList>
            <person name="Seki M."/>
            <person name="Narusaka M."/>
            <person name="Kamiya A."/>
            <person name="Ishida J."/>
            <person name="Satou M."/>
            <person name="Sakurai T."/>
            <person name="Nakajima M."/>
            <person name="Enju A."/>
            <person name="Akiyama K."/>
            <person name="Oono Y."/>
            <person name="Muramatsu M."/>
            <person name="Hayashizaki Y."/>
            <person name="Kawai J."/>
            <person name="Carninci P."/>
            <person name="Itoh M."/>
            <person name="Ishii Y."/>
            <person name="Arakawa T."/>
            <person name="Shibata K."/>
            <person name="Shinagawa A."/>
            <person name="Shinozaki K."/>
        </authorList>
    </citation>
    <scope>NUCLEOTIDE SEQUENCE [LARGE SCALE MRNA]</scope>
    <source>
        <strain>cv. Columbia</strain>
    </source>
</reference>
<reference key="4">
    <citation type="journal article" date="2003" name="Science">
        <title>Empirical analysis of transcriptional activity in the Arabidopsis genome.</title>
        <authorList>
            <person name="Yamada K."/>
            <person name="Lim J."/>
            <person name="Dale J.M."/>
            <person name="Chen H."/>
            <person name="Shinn P."/>
            <person name="Palm C.J."/>
            <person name="Southwick A.M."/>
            <person name="Wu H.C."/>
            <person name="Kim C.J."/>
            <person name="Nguyen M."/>
            <person name="Pham P.K."/>
            <person name="Cheuk R.F."/>
            <person name="Karlin-Newmann G."/>
            <person name="Liu S.X."/>
            <person name="Lam B."/>
            <person name="Sakano H."/>
            <person name="Wu T."/>
            <person name="Yu G."/>
            <person name="Miranda M."/>
            <person name="Quach H.L."/>
            <person name="Tripp M."/>
            <person name="Chang C.H."/>
            <person name="Lee J.M."/>
            <person name="Toriumi M.J."/>
            <person name="Chan M.M."/>
            <person name="Tang C.C."/>
            <person name="Onodera C.S."/>
            <person name="Deng J.M."/>
            <person name="Akiyama K."/>
            <person name="Ansari Y."/>
            <person name="Arakawa T."/>
            <person name="Banh J."/>
            <person name="Banno F."/>
            <person name="Bowser L."/>
            <person name="Brooks S.Y."/>
            <person name="Carninci P."/>
            <person name="Chao Q."/>
            <person name="Choy N."/>
            <person name="Enju A."/>
            <person name="Goldsmith A.D."/>
            <person name="Gurjal M."/>
            <person name="Hansen N.F."/>
            <person name="Hayashizaki Y."/>
            <person name="Johnson-Hopson C."/>
            <person name="Hsuan V.W."/>
            <person name="Iida K."/>
            <person name="Karnes M."/>
            <person name="Khan S."/>
            <person name="Koesema E."/>
            <person name="Ishida J."/>
            <person name="Jiang P.X."/>
            <person name="Jones T."/>
            <person name="Kawai J."/>
            <person name="Kamiya A."/>
            <person name="Meyers C."/>
            <person name="Nakajima M."/>
            <person name="Narusaka M."/>
            <person name="Seki M."/>
            <person name="Sakurai T."/>
            <person name="Satou M."/>
            <person name="Tamse R."/>
            <person name="Vaysberg M."/>
            <person name="Wallender E.K."/>
            <person name="Wong C."/>
            <person name="Yamamura Y."/>
            <person name="Yuan S."/>
            <person name="Shinozaki K."/>
            <person name="Davis R.W."/>
            <person name="Theologis A."/>
            <person name="Ecker J.R."/>
        </authorList>
    </citation>
    <scope>NUCLEOTIDE SEQUENCE [LARGE SCALE MRNA]</scope>
    <source>
        <strain>cv. Columbia</strain>
    </source>
</reference>
<reference key="5">
    <citation type="submission" date="2002-03" db="EMBL/GenBank/DDBJ databases">
        <title>Full-length cDNA from Arabidopsis thaliana.</title>
        <authorList>
            <person name="Brover V.V."/>
            <person name="Troukhan M.E."/>
            <person name="Alexandrov N.A."/>
            <person name="Lu Y.-P."/>
            <person name="Flavell R.B."/>
            <person name="Feldmann K.A."/>
        </authorList>
    </citation>
    <scope>NUCLEOTIDE SEQUENCE [LARGE SCALE MRNA]</scope>
</reference>
<reference key="6">
    <citation type="journal article" date="2001" name="Plant Physiol.">
        <title>The organization of cytoplasmic ribosomal protein genes in the Arabidopsis genome.</title>
        <authorList>
            <person name="Barakat A."/>
            <person name="Szick-Miranda K."/>
            <person name="Chang I.-F."/>
            <person name="Guyot R."/>
            <person name="Blanc G."/>
            <person name="Cooke R."/>
            <person name="Delseny M."/>
            <person name="Bailey-Serres J."/>
        </authorList>
    </citation>
    <scope>GENE FAMILY ORGANIZATION</scope>
    <scope>NOMENCLATURE</scope>
</reference>
<reference key="7">
    <citation type="journal article" date="2023" name="Plant Cell">
        <title>An updated nomenclature for plant ribosomal protein genes.</title>
        <authorList>
            <person name="Scarpin M.R."/>
            <person name="Busche M."/>
            <person name="Martinez R.E."/>
            <person name="Harper L.C."/>
            <person name="Reiser L."/>
            <person name="Szakonyi D."/>
            <person name="Merchante C."/>
            <person name="Lan T."/>
            <person name="Xiong W."/>
            <person name="Mo B."/>
            <person name="Tang G."/>
            <person name="Chen X."/>
            <person name="Bailey-Serres J."/>
            <person name="Browning K.S."/>
            <person name="Brunkard J.O."/>
        </authorList>
    </citation>
    <scope>NOMENCLATURE</scope>
</reference>
<name>RL371_ARATH</name>
<evidence type="ECO:0000250" key="1"/>
<evidence type="ECO:0000255" key="2"/>
<evidence type="ECO:0000303" key="3">
    <source>
    </source>
</evidence>
<evidence type="ECO:0000305" key="4"/>
<protein>
    <recommendedName>
        <fullName evidence="3">Large ribosomal subunit protein eL37z</fullName>
    </recommendedName>
    <alternativeName>
        <fullName>60S ribosomal protein L37-1</fullName>
    </alternativeName>
</protein>
<feature type="chain" id="PRO_0000245493" description="Large ribosomal subunit protein eL37z">
    <location>
        <begin position="1"/>
        <end position="95"/>
    </location>
</feature>
<feature type="zinc finger region" description="C4-type" evidence="2">
    <location>
        <begin position="19"/>
        <end position="37"/>
    </location>
</feature>
<feature type="binding site" evidence="1">
    <location>
        <position position="19"/>
    </location>
    <ligand>
        <name>Zn(2+)</name>
        <dbReference type="ChEBI" id="CHEBI:29105"/>
    </ligand>
</feature>
<feature type="binding site" evidence="1">
    <location>
        <position position="22"/>
    </location>
    <ligand>
        <name>Zn(2+)</name>
        <dbReference type="ChEBI" id="CHEBI:29105"/>
    </ligand>
</feature>
<feature type="binding site" evidence="1">
    <location>
        <position position="34"/>
    </location>
    <ligand>
        <name>Zn(2+)</name>
        <dbReference type="ChEBI" id="CHEBI:29105"/>
    </ligand>
</feature>
<feature type="binding site" evidence="1">
    <location>
        <position position="37"/>
    </location>
    <ligand>
        <name>Zn(2+)</name>
        <dbReference type="ChEBI" id="CHEBI:29105"/>
    </ligand>
</feature>
<accession>Q8LFH7</accession>
<proteinExistence type="inferred from homology"/>
<keyword id="KW-0479">Metal-binding</keyword>
<keyword id="KW-1185">Reference proteome</keyword>
<keyword id="KW-0687">Ribonucleoprotein</keyword>
<keyword id="KW-0689">Ribosomal protein</keyword>
<keyword id="KW-0694">RNA-binding</keyword>
<keyword id="KW-0699">rRNA-binding</keyword>
<keyword id="KW-0862">Zinc</keyword>
<keyword id="KW-0863">Zinc-finger</keyword>
<dbReference type="EMBL" id="AC007591">
    <property type="status" value="NOT_ANNOTATED_CDS"/>
    <property type="molecule type" value="Genomic_DNA"/>
</dbReference>
<dbReference type="EMBL" id="CP002684">
    <property type="protein sequence ID" value="AEE29295.1"/>
    <property type="molecule type" value="Genomic_DNA"/>
</dbReference>
<dbReference type="EMBL" id="CP002684">
    <property type="protein sequence ID" value="ANM59230.1"/>
    <property type="molecule type" value="Genomic_DNA"/>
</dbReference>
<dbReference type="EMBL" id="AK118761">
    <property type="protein sequence ID" value="BAC43354.1"/>
    <property type="molecule type" value="mRNA"/>
</dbReference>
<dbReference type="EMBL" id="BT004963">
    <property type="protein sequence ID" value="AAO50496.1"/>
    <property type="molecule type" value="mRNA"/>
</dbReference>
<dbReference type="EMBL" id="AY084836">
    <property type="protein sequence ID" value="AAM61401.1"/>
    <property type="molecule type" value="mRNA"/>
</dbReference>
<dbReference type="RefSeq" id="NP_001319009.1">
    <property type="nucleotide sequence ID" value="NM_001332158.1"/>
</dbReference>
<dbReference type="RefSeq" id="NP_172977.1">
    <property type="nucleotide sequence ID" value="NM_101393.4"/>
</dbReference>
<dbReference type="SMR" id="Q8LFH7"/>
<dbReference type="BioGRID" id="23332">
    <property type="interactions" value="61"/>
</dbReference>
<dbReference type="FunCoup" id="Q8LFH7">
    <property type="interactions" value="1701"/>
</dbReference>
<dbReference type="STRING" id="3702.Q8LFH7"/>
<dbReference type="PaxDb" id="3702-AT1G15250.1"/>
<dbReference type="ProteomicsDB" id="237029"/>
<dbReference type="EnsemblPlants" id="AT1G15250.1">
    <property type="protein sequence ID" value="AT1G15250.1"/>
    <property type="gene ID" value="AT1G15250"/>
</dbReference>
<dbReference type="EnsemblPlants" id="AT1G15250.2">
    <property type="protein sequence ID" value="AT1G15250.2"/>
    <property type="gene ID" value="AT1G15250"/>
</dbReference>
<dbReference type="GeneID" id="838092"/>
<dbReference type="Gramene" id="AT1G15250.1">
    <property type="protein sequence ID" value="AT1G15250.1"/>
    <property type="gene ID" value="AT1G15250"/>
</dbReference>
<dbReference type="Gramene" id="AT1G15250.2">
    <property type="protein sequence ID" value="AT1G15250.2"/>
    <property type="gene ID" value="AT1G15250"/>
</dbReference>
<dbReference type="KEGG" id="ath:AT1G15250"/>
<dbReference type="Araport" id="AT1G15250"/>
<dbReference type="TAIR" id="AT1G15250"/>
<dbReference type="eggNOG" id="KOG3475">
    <property type="taxonomic scope" value="Eukaryota"/>
</dbReference>
<dbReference type="HOGENOM" id="CLU_150908_0_0_1"/>
<dbReference type="InParanoid" id="Q8LFH7"/>
<dbReference type="OMA" id="AREHHIF"/>
<dbReference type="OrthoDB" id="528079at2759"/>
<dbReference type="PhylomeDB" id="Q8LFH7"/>
<dbReference type="PRO" id="PR:Q8LFH7"/>
<dbReference type="Proteomes" id="UP000006548">
    <property type="component" value="Chromosome 1"/>
</dbReference>
<dbReference type="ExpressionAtlas" id="Q8LFH7">
    <property type="expression patterns" value="baseline and differential"/>
</dbReference>
<dbReference type="GO" id="GO:0022625">
    <property type="term" value="C:cytosolic large ribosomal subunit"/>
    <property type="evidence" value="ECO:0007005"/>
    <property type="project" value="TAIR"/>
</dbReference>
<dbReference type="GO" id="GO:0005576">
    <property type="term" value="C:extracellular region"/>
    <property type="evidence" value="ECO:0007005"/>
    <property type="project" value="TAIR"/>
</dbReference>
<dbReference type="GO" id="GO:0003729">
    <property type="term" value="F:mRNA binding"/>
    <property type="evidence" value="ECO:0000314"/>
    <property type="project" value="TAIR"/>
</dbReference>
<dbReference type="GO" id="GO:0019843">
    <property type="term" value="F:rRNA binding"/>
    <property type="evidence" value="ECO:0007669"/>
    <property type="project" value="UniProtKB-KW"/>
</dbReference>
<dbReference type="GO" id="GO:0003735">
    <property type="term" value="F:structural constituent of ribosome"/>
    <property type="evidence" value="ECO:0000314"/>
    <property type="project" value="CAFA"/>
</dbReference>
<dbReference type="GO" id="GO:0008270">
    <property type="term" value="F:zinc ion binding"/>
    <property type="evidence" value="ECO:0007669"/>
    <property type="project" value="UniProtKB-KW"/>
</dbReference>
<dbReference type="GO" id="GO:0006412">
    <property type="term" value="P:translation"/>
    <property type="evidence" value="ECO:0007669"/>
    <property type="project" value="InterPro"/>
</dbReference>
<dbReference type="FunFam" id="2.20.25.30:FF:000001">
    <property type="entry name" value="Ribosomal protein L37"/>
    <property type="match status" value="1"/>
</dbReference>
<dbReference type="Gene3D" id="2.20.25.30">
    <property type="match status" value="1"/>
</dbReference>
<dbReference type="InterPro" id="IPR001569">
    <property type="entry name" value="Ribosomal_eL37"/>
</dbReference>
<dbReference type="InterPro" id="IPR011331">
    <property type="entry name" value="Ribosomal_eL37/eL43"/>
</dbReference>
<dbReference type="InterPro" id="IPR018267">
    <property type="entry name" value="Ribosomal_eL37_CS"/>
</dbReference>
<dbReference type="InterPro" id="IPR011332">
    <property type="entry name" value="Ribosomal_zn-bd"/>
</dbReference>
<dbReference type="PANTHER" id="PTHR10768">
    <property type="entry name" value="60S RIBOSOMAL PROTEIN L37"/>
    <property type="match status" value="1"/>
</dbReference>
<dbReference type="PANTHER" id="PTHR10768:SF25">
    <property type="entry name" value="LARGE RIBOSOMAL SUBUNIT PROTEIN EL37X-RELATED"/>
    <property type="match status" value="1"/>
</dbReference>
<dbReference type="Pfam" id="PF01907">
    <property type="entry name" value="Ribosomal_L37e"/>
    <property type="match status" value="1"/>
</dbReference>
<dbReference type="SUPFAM" id="SSF57829">
    <property type="entry name" value="Zn-binding ribosomal proteins"/>
    <property type="match status" value="1"/>
</dbReference>
<dbReference type="PROSITE" id="PS01077">
    <property type="entry name" value="RIBOSOMAL_L37E"/>
    <property type="match status" value="1"/>
</dbReference>